<sequence>MVKIVVRIATYASHSALQILKGAKDEGFETIAFGSERVKPLYTKYFPVADYFLVGKYPEDELLELNAVVIPTGSFVAHLGVELVERMKVPYFGNKRVLKWESDRNLERKWLEKAKLKLPRVYDDPDDIDRPVIVKPHGAKGGRGYFIAKDPQDFWTKVEKFLGIKDKEDLKNVQIQEYVIGVPVYPHYFYSKLTRELELMSIDRRYESNVDAIGRIPSKDQLELELDITYTVIGNIPLVLRESLLMDVIEAGERTVKAAEELMGGLWGPFCLEGVFTPDLDFVVFEISARIVAGTNPFINGSPYTWLKYDEPMSTGRRIAREIRLAIEEDKLDEVVS</sequence>
<keyword id="KW-0067">ATP-binding</keyword>
<keyword id="KW-0436">Ligase</keyword>
<keyword id="KW-0460">Magnesium</keyword>
<keyword id="KW-0464">Manganese</keyword>
<keyword id="KW-0479">Metal-binding</keyword>
<keyword id="KW-0547">Nucleotide-binding</keyword>
<keyword id="KW-0658">Purine biosynthesis</keyword>
<feature type="chain" id="PRO_0000348635" description="5-formaminoimidazole-4-carboxamide-1-(beta)-D-ribofuranosyl 5'-monophosphate synthetase">
    <location>
        <begin position="1"/>
        <end position="337"/>
    </location>
</feature>
<feature type="domain" description="ATP-grasp" evidence="2">
    <location>
        <begin position="81"/>
        <end position="328"/>
    </location>
</feature>
<feature type="binding site" evidence="2">
    <location>
        <position position="14"/>
    </location>
    <ligand>
        <name>5-amino-1-(5-phospho-beta-D-ribosyl)imidazole-4-carboxamide</name>
        <dbReference type="ChEBI" id="CHEBI:58475"/>
    </ligand>
</feature>
<feature type="binding site" evidence="2">
    <location>
        <position position="74"/>
    </location>
    <ligand>
        <name>5-amino-1-(5-phospho-beta-D-ribosyl)imidazole-4-carboxamide</name>
        <dbReference type="ChEBI" id="CHEBI:58475"/>
    </ligand>
</feature>
<feature type="binding site" evidence="2">
    <location>
        <begin position="125"/>
        <end position="185"/>
    </location>
    <ligand>
        <name>ATP</name>
        <dbReference type="ChEBI" id="CHEBI:30616"/>
    </ligand>
</feature>
<feature type="binding site" evidence="2">
    <location>
        <position position="207"/>
    </location>
    <ligand>
        <name>ATP</name>
        <dbReference type="ChEBI" id="CHEBI:30616"/>
    </ligand>
</feature>
<feature type="binding site" evidence="2">
    <location>
        <position position="235"/>
    </location>
    <ligand>
        <name>5-amino-1-(5-phospho-beta-D-ribosyl)imidazole-4-carboxamide</name>
        <dbReference type="ChEBI" id="CHEBI:58475"/>
    </ligand>
</feature>
<feature type="binding site" evidence="2">
    <location>
        <position position="273"/>
    </location>
    <ligand>
        <name>Mg(2+)</name>
        <dbReference type="ChEBI" id="CHEBI:18420"/>
    </ligand>
</feature>
<feature type="binding site" evidence="2">
    <location>
        <position position="286"/>
    </location>
    <ligand>
        <name>Mg(2+)</name>
        <dbReference type="ChEBI" id="CHEBI:18420"/>
    </ligand>
</feature>
<reference key="1">
    <citation type="journal article" date="2003" name="Mol. Microbiol.">
        <title>An integrated analysis of the genome of the hyperthermophilic archaeon Pyrococcus abyssi.</title>
        <authorList>
            <person name="Cohen G.N."/>
            <person name="Barbe V."/>
            <person name="Flament D."/>
            <person name="Galperin M."/>
            <person name="Heilig R."/>
            <person name="Lecompte O."/>
            <person name="Poch O."/>
            <person name="Prieur D."/>
            <person name="Querellou J."/>
            <person name="Ripp R."/>
            <person name="Thierry J.-C."/>
            <person name="Van der Oost J."/>
            <person name="Weissenbach J."/>
            <person name="Zivanovic Y."/>
            <person name="Forterre P."/>
        </authorList>
    </citation>
    <scope>NUCLEOTIDE SEQUENCE [LARGE SCALE GENOMIC DNA]</scope>
    <source>
        <strain>GE5 / Orsay</strain>
    </source>
</reference>
<reference key="2">
    <citation type="journal article" date="2012" name="Curr. Microbiol.">
        <title>Re-annotation of two hyperthermophilic archaea Pyrococcus abyssi GE5 and Pyrococcus furiosus DSM 3638.</title>
        <authorList>
            <person name="Gao J."/>
            <person name="Wang J."/>
        </authorList>
    </citation>
    <scope>GENOME REANNOTATION</scope>
    <source>
        <strain>GE5 / Orsay</strain>
    </source>
</reference>
<organism>
    <name type="scientific">Pyrococcus abyssi (strain GE5 / Orsay)</name>
    <dbReference type="NCBI Taxonomy" id="272844"/>
    <lineage>
        <taxon>Archaea</taxon>
        <taxon>Methanobacteriati</taxon>
        <taxon>Methanobacteriota</taxon>
        <taxon>Thermococci</taxon>
        <taxon>Thermococcales</taxon>
        <taxon>Thermococcaceae</taxon>
        <taxon>Pyrococcus</taxon>
    </lineage>
</organism>
<protein>
    <recommendedName>
        <fullName evidence="2">5-formaminoimidazole-4-carboxamide-1-(beta)-D-ribofuranosyl 5'-monophosphate synthetase</fullName>
        <ecNumber evidence="2">6.3.4.23</ecNumber>
    </recommendedName>
    <alternativeName>
        <fullName evidence="2">5-aminoimidazole-4-carboxamide-1-beta-D-ribofuranosyl 5'-monophosphate--formate ligase</fullName>
    </alternativeName>
</protein>
<proteinExistence type="inferred from homology"/>
<dbReference type="EC" id="6.3.4.23" evidence="2"/>
<dbReference type="EMBL" id="AJ248285">
    <property type="protein sequence ID" value="CAB49715.1"/>
    <property type="molecule type" value="Genomic_DNA"/>
</dbReference>
<dbReference type="EMBL" id="HE613800">
    <property type="protein sequence ID" value="CCE70201.1"/>
    <property type="molecule type" value="Genomic_DNA"/>
</dbReference>
<dbReference type="PIR" id="B75125">
    <property type="entry name" value="B75125"/>
</dbReference>
<dbReference type="SMR" id="Q9V0I8"/>
<dbReference type="STRING" id="272844.PAB0547"/>
<dbReference type="KEGG" id="pab:PAB0547"/>
<dbReference type="PATRIC" id="fig|272844.11.peg.844"/>
<dbReference type="eggNOG" id="arCOG04346">
    <property type="taxonomic scope" value="Archaea"/>
</dbReference>
<dbReference type="HOGENOM" id="CLU_065084_0_0_2"/>
<dbReference type="PhylomeDB" id="Q9V0I8"/>
<dbReference type="UniPathway" id="UPA00074">
    <property type="reaction ID" value="UER00134"/>
</dbReference>
<dbReference type="Proteomes" id="UP000000810">
    <property type="component" value="Chromosome"/>
</dbReference>
<dbReference type="Proteomes" id="UP000009139">
    <property type="component" value="Chromosome"/>
</dbReference>
<dbReference type="GO" id="GO:0005524">
    <property type="term" value="F:ATP binding"/>
    <property type="evidence" value="ECO:0007669"/>
    <property type="project" value="UniProtKB-KW"/>
</dbReference>
<dbReference type="GO" id="GO:0016879">
    <property type="term" value="F:ligase activity, forming carbon-nitrogen bonds"/>
    <property type="evidence" value="ECO:0007669"/>
    <property type="project" value="UniProtKB-UniRule"/>
</dbReference>
<dbReference type="GO" id="GO:0000287">
    <property type="term" value="F:magnesium ion binding"/>
    <property type="evidence" value="ECO:0007669"/>
    <property type="project" value="InterPro"/>
</dbReference>
<dbReference type="GO" id="GO:0006189">
    <property type="term" value="P:'de novo' IMP biosynthetic process"/>
    <property type="evidence" value="ECO:0007669"/>
    <property type="project" value="UniProtKB-UniRule"/>
</dbReference>
<dbReference type="Gene3D" id="3.40.50.20">
    <property type="match status" value="1"/>
</dbReference>
<dbReference type="Gene3D" id="3.30.1490.20">
    <property type="entry name" value="ATP-grasp fold, A domain"/>
    <property type="match status" value="1"/>
</dbReference>
<dbReference type="Gene3D" id="3.30.470.20">
    <property type="entry name" value="ATP-grasp fold, B domain"/>
    <property type="match status" value="1"/>
</dbReference>
<dbReference type="HAMAP" id="MF_01163">
    <property type="entry name" value="IMP_biosynth_PurP"/>
    <property type="match status" value="1"/>
</dbReference>
<dbReference type="InterPro" id="IPR011761">
    <property type="entry name" value="ATP-grasp"/>
</dbReference>
<dbReference type="InterPro" id="IPR013815">
    <property type="entry name" value="ATP_grasp_subdomain_1"/>
</dbReference>
<dbReference type="InterPro" id="IPR023656">
    <property type="entry name" value="IMP_biosynth_PurP"/>
</dbReference>
<dbReference type="InterPro" id="IPR009720">
    <property type="entry name" value="IMP_biosynth_PurP_C"/>
</dbReference>
<dbReference type="InterPro" id="IPR010672">
    <property type="entry name" value="IMP_biosynth_PurP_N"/>
</dbReference>
<dbReference type="InterPro" id="IPR016185">
    <property type="entry name" value="PreATP-grasp_dom_sf"/>
</dbReference>
<dbReference type="NCBIfam" id="NF009779">
    <property type="entry name" value="PRK13278.1-3"/>
    <property type="match status" value="1"/>
</dbReference>
<dbReference type="PANTHER" id="PTHR38147:SF2">
    <property type="entry name" value="5-FORMAMINOIMIDAZOLE-4-CARBOXAMIDE-1-(BETA)-D-RIBOFURANOSYL 5'-MONOPHOSPHATE SYNTHETASE"/>
    <property type="match status" value="1"/>
</dbReference>
<dbReference type="PANTHER" id="PTHR38147">
    <property type="entry name" value="5-FORMAMINOIMIDAZOLE-4-CARBOXAMIDE-1-(BETA)-D-RIBOFURANOSYL 5'-MONOPHOSPHATE SYNTHETASE-RELATED"/>
    <property type="match status" value="1"/>
</dbReference>
<dbReference type="Pfam" id="PF06849">
    <property type="entry name" value="DUF1246"/>
    <property type="match status" value="1"/>
</dbReference>
<dbReference type="Pfam" id="PF06973">
    <property type="entry name" value="DUF1297"/>
    <property type="match status" value="1"/>
</dbReference>
<dbReference type="PIRSF" id="PIRSF004602">
    <property type="entry name" value="ATPgrasp_PurP"/>
    <property type="match status" value="1"/>
</dbReference>
<dbReference type="SUPFAM" id="SSF56059">
    <property type="entry name" value="Glutathione synthetase ATP-binding domain-like"/>
    <property type="match status" value="1"/>
</dbReference>
<dbReference type="SUPFAM" id="SSF52440">
    <property type="entry name" value="PreATP-grasp domain"/>
    <property type="match status" value="1"/>
</dbReference>
<dbReference type="PROSITE" id="PS50975">
    <property type="entry name" value="ATP_GRASP"/>
    <property type="match status" value="1"/>
</dbReference>
<comment type="function">
    <text evidence="2">Catalyzes the ATP- and formate-dependent formylation of 5-aminoimidazole-4-carboxamide-1-beta-d-ribofuranosyl 5'-monophosphate (AICAR) to 5-formaminoimidazole-4-carboxamide-1-beta-d-ribofuranosyl 5'-monophosphate (FAICAR) in the absence of folates.</text>
</comment>
<comment type="catalytic activity">
    <reaction evidence="2">
        <text>5-amino-1-(5-phospho-beta-D-ribosyl)imidazole-4-carboxamide + formate + ATP = 5-formamido-1-(5-phospho-D-ribosyl)imidazole-4-carboxamide + ADP + phosphate</text>
        <dbReference type="Rhea" id="RHEA:24836"/>
        <dbReference type="ChEBI" id="CHEBI:15740"/>
        <dbReference type="ChEBI" id="CHEBI:30616"/>
        <dbReference type="ChEBI" id="CHEBI:43474"/>
        <dbReference type="ChEBI" id="CHEBI:58467"/>
        <dbReference type="ChEBI" id="CHEBI:58475"/>
        <dbReference type="ChEBI" id="CHEBI:456216"/>
        <dbReference type="EC" id="6.3.4.23"/>
    </reaction>
</comment>
<comment type="cofactor">
    <cofactor evidence="1">
        <name>Mg(2+)</name>
        <dbReference type="ChEBI" id="CHEBI:18420"/>
    </cofactor>
    <cofactor evidence="1">
        <name>Mn(2+)</name>
        <dbReference type="ChEBI" id="CHEBI:29035"/>
    </cofactor>
    <text evidence="1">Binds 1 Mg(2+) or Mn(2+) ion per subunit.</text>
</comment>
<comment type="pathway">
    <text evidence="2">Purine metabolism; IMP biosynthesis via de novo pathway; 5-formamido-1-(5-phospho-D-ribosyl)imidazole-4-carboxamide from 5-amino-1-(5-phospho-D-ribosyl)imidazole-4-carboxamide (formate route): step 1/1.</text>
</comment>
<comment type="similarity">
    <text evidence="2">Belongs to the phosphohexose mutase family.</text>
</comment>
<name>PURP_PYRAB</name>
<gene>
    <name evidence="2" type="primary">purP</name>
    <name type="ordered locus">PYRAB08010</name>
    <name type="ORF">PAB0547</name>
</gene>
<evidence type="ECO:0000250" key="1"/>
<evidence type="ECO:0000255" key="2">
    <source>
        <dbReference type="HAMAP-Rule" id="MF_01163"/>
    </source>
</evidence>
<accession>Q9V0I8</accession>
<accession>G8ZH06</accession>